<sequence>MATKDLFAQPEPSRQPASPAERMAALRAELHAHAHRYYVLDEPTIPDSEYDRLFKELQDLEAAYPELLTPDSPTQRVGGKPLDQFASVRHKVPMLSIRTETDTEATGAQNFDTRVRKELGLTESNPPVEYVAELKFDGLAMSLRYEHGVLVQAATRGDGEVGEEVTQNIRTIRQIPLKLPSDAPPVLEVRGEVYMRRADFEALNDKQREKIAAGAKGEKTFVNPRNAAAGAVRQLDPAIAAQRPLSFFAYGVGEVVLEAEQANPKNPWVATHMELLQALKSWGFPVAAQTKIAHGASELIAFHQAMGQQRDSLPYDIDGVVYKVNSLALQKQMGFVSREPRWAVAHKYPAQEQLTTVLGIEVQVGRTGKLTPVAKLAPVFVGGVTVTNATLHNEDEARRKDVRVGDTVIVRRAGDVIPEVVSVLPDKRLPGAPMFTMPRQCPVCGSDAVREEGEADYRCTGGLFCGAQRKEAILHYAHRRAVEIEGLGDKLVEQLVDANVIRTLPDLYKLGLTALASLDRMAEKSANNLLKALEKSKQTTLPRFLFGLGIRHVGEATAKELARHFGNLDAIMDATQEQLLAVSDVGSIVAQSIRTFFDQPHNREVVEQLRACGVHWEEGEPAAVAPKPLSGKTFVITGTLPTLSRDEAKDKVEAAGGKVAGSVSKKTDYVVAGTEAGSKLVKAQELGIAVIDEAALMRLLASAEAE</sequence>
<feature type="chain" id="PRO_0000313362" description="DNA ligase">
    <location>
        <begin position="1"/>
        <end position="706"/>
    </location>
</feature>
<feature type="domain" description="BRCT" evidence="1">
    <location>
        <begin position="624"/>
        <end position="706"/>
    </location>
</feature>
<feature type="active site" description="N6-AMP-lysine intermediate" evidence="1">
    <location>
        <position position="135"/>
    </location>
</feature>
<feature type="binding site" evidence="1">
    <location>
        <begin position="47"/>
        <end position="51"/>
    </location>
    <ligand>
        <name>NAD(+)</name>
        <dbReference type="ChEBI" id="CHEBI:57540"/>
    </ligand>
</feature>
<feature type="binding site" evidence="1">
    <location>
        <begin position="96"/>
        <end position="97"/>
    </location>
    <ligand>
        <name>NAD(+)</name>
        <dbReference type="ChEBI" id="CHEBI:57540"/>
    </ligand>
</feature>
<feature type="binding site" evidence="1">
    <location>
        <position position="133"/>
    </location>
    <ligand>
        <name>NAD(+)</name>
        <dbReference type="ChEBI" id="CHEBI:57540"/>
    </ligand>
</feature>
<feature type="binding site" evidence="1">
    <location>
        <position position="156"/>
    </location>
    <ligand>
        <name>NAD(+)</name>
        <dbReference type="ChEBI" id="CHEBI:57540"/>
    </ligand>
</feature>
<feature type="binding site" evidence="1">
    <location>
        <position position="192"/>
    </location>
    <ligand>
        <name>NAD(+)</name>
        <dbReference type="ChEBI" id="CHEBI:57540"/>
    </ligand>
</feature>
<feature type="binding site" evidence="1">
    <location>
        <position position="323"/>
    </location>
    <ligand>
        <name>NAD(+)</name>
        <dbReference type="ChEBI" id="CHEBI:57540"/>
    </ligand>
</feature>
<feature type="binding site" evidence="1">
    <location>
        <position position="347"/>
    </location>
    <ligand>
        <name>NAD(+)</name>
        <dbReference type="ChEBI" id="CHEBI:57540"/>
    </ligand>
</feature>
<feature type="binding site" evidence="1">
    <location>
        <position position="441"/>
    </location>
    <ligand>
        <name>Zn(2+)</name>
        <dbReference type="ChEBI" id="CHEBI:29105"/>
    </ligand>
</feature>
<feature type="binding site" evidence="1">
    <location>
        <position position="444"/>
    </location>
    <ligand>
        <name>Zn(2+)</name>
        <dbReference type="ChEBI" id="CHEBI:29105"/>
    </ligand>
</feature>
<feature type="binding site" evidence="1">
    <location>
        <position position="459"/>
    </location>
    <ligand>
        <name>Zn(2+)</name>
        <dbReference type="ChEBI" id="CHEBI:29105"/>
    </ligand>
</feature>
<feature type="binding site" evidence="1">
    <location>
        <position position="465"/>
    </location>
    <ligand>
        <name>Zn(2+)</name>
        <dbReference type="ChEBI" id="CHEBI:29105"/>
    </ligand>
</feature>
<evidence type="ECO:0000255" key="1">
    <source>
        <dbReference type="HAMAP-Rule" id="MF_01588"/>
    </source>
</evidence>
<proteinExistence type="inferred from homology"/>
<organism>
    <name type="scientific">Polaromonas sp. (strain JS666 / ATCC BAA-500)</name>
    <dbReference type="NCBI Taxonomy" id="296591"/>
    <lineage>
        <taxon>Bacteria</taxon>
        <taxon>Pseudomonadati</taxon>
        <taxon>Pseudomonadota</taxon>
        <taxon>Betaproteobacteria</taxon>
        <taxon>Burkholderiales</taxon>
        <taxon>Comamonadaceae</taxon>
        <taxon>Polaromonas</taxon>
    </lineage>
</organism>
<reference key="1">
    <citation type="journal article" date="2008" name="Appl. Environ. Microbiol.">
        <title>The genome of Polaromonas sp. strain JS666: insights into the evolution of a hydrocarbon- and xenobiotic-degrading bacterium, and features of relevance to biotechnology.</title>
        <authorList>
            <person name="Mattes T.E."/>
            <person name="Alexander A.K."/>
            <person name="Richardson P.M."/>
            <person name="Munk A.C."/>
            <person name="Han C.S."/>
            <person name="Stothard P."/>
            <person name="Coleman N.V."/>
        </authorList>
    </citation>
    <scope>NUCLEOTIDE SEQUENCE [LARGE SCALE GENOMIC DNA]</scope>
    <source>
        <strain>JS666 / ATCC BAA-500</strain>
    </source>
</reference>
<dbReference type="EC" id="6.5.1.2" evidence="1"/>
<dbReference type="EMBL" id="CP000316">
    <property type="protein sequence ID" value="ABE44508.1"/>
    <property type="molecule type" value="Genomic_DNA"/>
</dbReference>
<dbReference type="RefSeq" id="WP_011483506.1">
    <property type="nucleotide sequence ID" value="NC_007948.1"/>
</dbReference>
<dbReference type="SMR" id="Q12AD4"/>
<dbReference type="STRING" id="296591.Bpro_2592"/>
<dbReference type="KEGG" id="pol:Bpro_2592"/>
<dbReference type="eggNOG" id="COG0272">
    <property type="taxonomic scope" value="Bacteria"/>
</dbReference>
<dbReference type="HOGENOM" id="CLU_007764_2_1_4"/>
<dbReference type="OrthoDB" id="9759736at2"/>
<dbReference type="Proteomes" id="UP000001983">
    <property type="component" value="Chromosome"/>
</dbReference>
<dbReference type="GO" id="GO:0003677">
    <property type="term" value="F:DNA binding"/>
    <property type="evidence" value="ECO:0007669"/>
    <property type="project" value="InterPro"/>
</dbReference>
<dbReference type="GO" id="GO:0003911">
    <property type="term" value="F:DNA ligase (NAD+) activity"/>
    <property type="evidence" value="ECO:0007669"/>
    <property type="project" value="UniProtKB-UniRule"/>
</dbReference>
<dbReference type="GO" id="GO:0046872">
    <property type="term" value="F:metal ion binding"/>
    <property type="evidence" value="ECO:0007669"/>
    <property type="project" value="UniProtKB-KW"/>
</dbReference>
<dbReference type="GO" id="GO:0006281">
    <property type="term" value="P:DNA repair"/>
    <property type="evidence" value="ECO:0007669"/>
    <property type="project" value="UniProtKB-KW"/>
</dbReference>
<dbReference type="GO" id="GO:0006260">
    <property type="term" value="P:DNA replication"/>
    <property type="evidence" value="ECO:0007669"/>
    <property type="project" value="UniProtKB-KW"/>
</dbReference>
<dbReference type="CDD" id="cd17748">
    <property type="entry name" value="BRCT_DNA_ligase_like"/>
    <property type="match status" value="1"/>
</dbReference>
<dbReference type="CDD" id="cd00114">
    <property type="entry name" value="LIGANc"/>
    <property type="match status" value="1"/>
</dbReference>
<dbReference type="FunFam" id="1.10.150.20:FF:000006">
    <property type="entry name" value="DNA ligase"/>
    <property type="match status" value="1"/>
</dbReference>
<dbReference type="FunFam" id="1.10.150.20:FF:000007">
    <property type="entry name" value="DNA ligase"/>
    <property type="match status" value="1"/>
</dbReference>
<dbReference type="FunFam" id="1.10.287.610:FF:000002">
    <property type="entry name" value="DNA ligase"/>
    <property type="match status" value="1"/>
</dbReference>
<dbReference type="FunFam" id="2.40.50.140:FF:000012">
    <property type="entry name" value="DNA ligase"/>
    <property type="match status" value="1"/>
</dbReference>
<dbReference type="FunFam" id="3.30.470.30:FF:000001">
    <property type="entry name" value="DNA ligase"/>
    <property type="match status" value="1"/>
</dbReference>
<dbReference type="FunFam" id="3.40.50.10190:FF:000054">
    <property type="entry name" value="DNA ligase"/>
    <property type="match status" value="1"/>
</dbReference>
<dbReference type="Gene3D" id="6.20.10.30">
    <property type="match status" value="1"/>
</dbReference>
<dbReference type="Gene3D" id="1.10.150.20">
    <property type="entry name" value="5' to 3' exonuclease, C-terminal subdomain"/>
    <property type="match status" value="2"/>
</dbReference>
<dbReference type="Gene3D" id="3.40.50.10190">
    <property type="entry name" value="BRCT domain"/>
    <property type="match status" value="1"/>
</dbReference>
<dbReference type="Gene3D" id="3.30.470.30">
    <property type="entry name" value="DNA ligase/mRNA capping enzyme"/>
    <property type="match status" value="1"/>
</dbReference>
<dbReference type="Gene3D" id="1.10.287.610">
    <property type="entry name" value="Helix hairpin bin"/>
    <property type="match status" value="1"/>
</dbReference>
<dbReference type="Gene3D" id="2.40.50.140">
    <property type="entry name" value="Nucleic acid-binding proteins"/>
    <property type="match status" value="1"/>
</dbReference>
<dbReference type="HAMAP" id="MF_01588">
    <property type="entry name" value="DNA_ligase_A"/>
    <property type="match status" value="1"/>
</dbReference>
<dbReference type="InterPro" id="IPR001357">
    <property type="entry name" value="BRCT_dom"/>
</dbReference>
<dbReference type="InterPro" id="IPR036420">
    <property type="entry name" value="BRCT_dom_sf"/>
</dbReference>
<dbReference type="InterPro" id="IPR041663">
    <property type="entry name" value="DisA/LigA_HHH"/>
</dbReference>
<dbReference type="InterPro" id="IPR001679">
    <property type="entry name" value="DNA_ligase"/>
</dbReference>
<dbReference type="InterPro" id="IPR018239">
    <property type="entry name" value="DNA_ligase_AS"/>
</dbReference>
<dbReference type="InterPro" id="IPR033136">
    <property type="entry name" value="DNA_ligase_CS"/>
</dbReference>
<dbReference type="InterPro" id="IPR013839">
    <property type="entry name" value="DNAligase_adenylation"/>
</dbReference>
<dbReference type="InterPro" id="IPR013840">
    <property type="entry name" value="DNAligase_N"/>
</dbReference>
<dbReference type="InterPro" id="IPR003583">
    <property type="entry name" value="Hlx-hairpin-Hlx_DNA-bd_motif"/>
</dbReference>
<dbReference type="InterPro" id="IPR012340">
    <property type="entry name" value="NA-bd_OB-fold"/>
</dbReference>
<dbReference type="InterPro" id="IPR004150">
    <property type="entry name" value="NAD_DNA_ligase_OB"/>
</dbReference>
<dbReference type="InterPro" id="IPR010994">
    <property type="entry name" value="RuvA_2-like"/>
</dbReference>
<dbReference type="InterPro" id="IPR004149">
    <property type="entry name" value="Znf_DNAligase_C4"/>
</dbReference>
<dbReference type="NCBIfam" id="TIGR00575">
    <property type="entry name" value="dnlj"/>
    <property type="match status" value="1"/>
</dbReference>
<dbReference type="NCBIfam" id="NF005932">
    <property type="entry name" value="PRK07956.1"/>
    <property type="match status" value="1"/>
</dbReference>
<dbReference type="PANTHER" id="PTHR23389">
    <property type="entry name" value="CHROMOSOME TRANSMISSION FIDELITY FACTOR 18"/>
    <property type="match status" value="1"/>
</dbReference>
<dbReference type="PANTHER" id="PTHR23389:SF6">
    <property type="entry name" value="REPLICATION FACTOR C SUBUNIT 1"/>
    <property type="match status" value="1"/>
</dbReference>
<dbReference type="Pfam" id="PF00533">
    <property type="entry name" value="BRCT"/>
    <property type="match status" value="1"/>
</dbReference>
<dbReference type="Pfam" id="PF01653">
    <property type="entry name" value="DNA_ligase_aden"/>
    <property type="match status" value="1"/>
</dbReference>
<dbReference type="Pfam" id="PF03120">
    <property type="entry name" value="DNA_ligase_OB"/>
    <property type="match status" value="1"/>
</dbReference>
<dbReference type="Pfam" id="PF03119">
    <property type="entry name" value="DNA_ligase_ZBD"/>
    <property type="match status" value="1"/>
</dbReference>
<dbReference type="Pfam" id="PF12826">
    <property type="entry name" value="HHH_2"/>
    <property type="match status" value="1"/>
</dbReference>
<dbReference type="Pfam" id="PF14520">
    <property type="entry name" value="HHH_5"/>
    <property type="match status" value="1"/>
</dbReference>
<dbReference type="Pfam" id="PF22745">
    <property type="entry name" value="Nlig-Ia"/>
    <property type="match status" value="1"/>
</dbReference>
<dbReference type="PIRSF" id="PIRSF001604">
    <property type="entry name" value="LigA"/>
    <property type="match status" value="1"/>
</dbReference>
<dbReference type="SMART" id="SM00292">
    <property type="entry name" value="BRCT"/>
    <property type="match status" value="1"/>
</dbReference>
<dbReference type="SMART" id="SM00278">
    <property type="entry name" value="HhH1"/>
    <property type="match status" value="3"/>
</dbReference>
<dbReference type="SMART" id="SM00532">
    <property type="entry name" value="LIGANc"/>
    <property type="match status" value="1"/>
</dbReference>
<dbReference type="SUPFAM" id="SSF52113">
    <property type="entry name" value="BRCT domain"/>
    <property type="match status" value="1"/>
</dbReference>
<dbReference type="SUPFAM" id="SSF56091">
    <property type="entry name" value="DNA ligase/mRNA capping enzyme, catalytic domain"/>
    <property type="match status" value="1"/>
</dbReference>
<dbReference type="SUPFAM" id="SSF50249">
    <property type="entry name" value="Nucleic acid-binding proteins"/>
    <property type="match status" value="1"/>
</dbReference>
<dbReference type="SUPFAM" id="SSF47781">
    <property type="entry name" value="RuvA domain 2-like"/>
    <property type="match status" value="1"/>
</dbReference>
<dbReference type="PROSITE" id="PS50172">
    <property type="entry name" value="BRCT"/>
    <property type="match status" value="1"/>
</dbReference>
<dbReference type="PROSITE" id="PS01055">
    <property type="entry name" value="DNA_LIGASE_N1"/>
    <property type="match status" value="1"/>
</dbReference>
<dbReference type="PROSITE" id="PS01056">
    <property type="entry name" value="DNA_LIGASE_N2"/>
    <property type="match status" value="1"/>
</dbReference>
<gene>
    <name evidence="1" type="primary">ligA</name>
    <name type="ordered locus">Bpro_2592</name>
</gene>
<name>DNLJ_POLSJ</name>
<keyword id="KW-0227">DNA damage</keyword>
<keyword id="KW-0234">DNA repair</keyword>
<keyword id="KW-0235">DNA replication</keyword>
<keyword id="KW-0436">Ligase</keyword>
<keyword id="KW-0460">Magnesium</keyword>
<keyword id="KW-0464">Manganese</keyword>
<keyword id="KW-0479">Metal-binding</keyword>
<keyword id="KW-0520">NAD</keyword>
<keyword id="KW-1185">Reference proteome</keyword>
<keyword id="KW-0862">Zinc</keyword>
<comment type="function">
    <text evidence="1">DNA ligase that catalyzes the formation of phosphodiester linkages between 5'-phosphoryl and 3'-hydroxyl groups in double-stranded DNA using NAD as a coenzyme and as the energy source for the reaction. It is essential for DNA replication and repair of damaged DNA.</text>
</comment>
<comment type="catalytic activity">
    <reaction evidence="1">
        <text>NAD(+) + (deoxyribonucleotide)n-3'-hydroxyl + 5'-phospho-(deoxyribonucleotide)m = (deoxyribonucleotide)n+m + AMP + beta-nicotinamide D-nucleotide.</text>
        <dbReference type="EC" id="6.5.1.2"/>
    </reaction>
</comment>
<comment type="cofactor">
    <cofactor evidence="1">
        <name>Mg(2+)</name>
        <dbReference type="ChEBI" id="CHEBI:18420"/>
    </cofactor>
    <cofactor evidence="1">
        <name>Mn(2+)</name>
        <dbReference type="ChEBI" id="CHEBI:29035"/>
    </cofactor>
</comment>
<comment type="similarity">
    <text evidence="1">Belongs to the NAD-dependent DNA ligase family. LigA subfamily.</text>
</comment>
<protein>
    <recommendedName>
        <fullName evidence="1">DNA ligase</fullName>
        <ecNumber evidence="1">6.5.1.2</ecNumber>
    </recommendedName>
    <alternativeName>
        <fullName evidence="1">Polydeoxyribonucleotide synthase [NAD(+)]</fullName>
    </alternativeName>
</protein>
<accession>Q12AD4</accession>